<keyword id="KW-0106">Calcium</keyword>
<keyword id="KW-0903">Direct protein sequencing</keyword>
<keyword id="KW-0479">Metal-binding</keyword>
<keyword id="KW-0505">Motor protein</keyword>
<keyword id="KW-0514">Muscle protein</keyword>
<keyword id="KW-0518">Myosin</keyword>
<keyword id="KW-0677">Repeat</keyword>
<dbReference type="PIR" id="A28863">
    <property type="entry name" value="A28863"/>
</dbReference>
<dbReference type="SMR" id="P05944"/>
<dbReference type="EnsemblMetazoa" id="XM_021495157.1">
    <property type="protein sequence ID" value="XP_021350832.1"/>
    <property type="gene ID" value="LOC110448741"/>
</dbReference>
<dbReference type="OrthoDB" id="429467at2759"/>
<dbReference type="GO" id="GO:0016459">
    <property type="term" value="C:myosin complex"/>
    <property type="evidence" value="ECO:0007669"/>
    <property type="project" value="UniProtKB-KW"/>
</dbReference>
<dbReference type="GO" id="GO:0005509">
    <property type="term" value="F:calcium ion binding"/>
    <property type="evidence" value="ECO:0007669"/>
    <property type="project" value="InterPro"/>
</dbReference>
<dbReference type="FunFam" id="1.10.238.10:FF:000007">
    <property type="entry name" value="Putative myosin regulatory light chain sqh"/>
    <property type="match status" value="1"/>
</dbReference>
<dbReference type="Gene3D" id="1.10.238.10">
    <property type="entry name" value="EF-hand"/>
    <property type="match status" value="2"/>
</dbReference>
<dbReference type="InterPro" id="IPR011992">
    <property type="entry name" value="EF-hand-dom_pair"/>
</dbReference>
<dbReference type="InterPro" id="IPR018247">
    <property type="entry name" value="EF_Hand_1_Ca_BS"/>
</dbReference>
<dbReference type="InterPro" id="IPR002048">
    <property type="entry name" value="EF_hand_dom"/>
</dbReference>
<dbReference type="InterPro" id="IPR050403">
    <property type="entry name" value="Myosin_RLC"/>
</dbReference>
<dbReference type="PANTHER" id="PTHR23049">
    <property type="entry name" value="MYOSIN REGULATORY LIGHT CHAIN 2"/>
    <property type="match status" value="1"/>
</dbReference>
<dbReference type="Pfam" id="PF13499">
    <property type="entry name" value="EF-hand_7"/>
    <property type="match status" value="1"/>
</dbReference>
<dbReference type="SMART" id="SM00054">
    <property type="entry name" value="EFh"/>
    <property type="match status" value="2"/>
</dbReference>
<dbReference type="SUPFAM" id="SSF47473">
    <property type="entry name" value="EF-hand"/>
    <property type="match status" value="1"/>
</dbReference>
<dbReference type="PROSITE" id="PS00018">
    <property type="entry name" value="EF_HAND_1"/>
    <property type="match status" value="1"/>
</dbReference>
<dbReference type="PROSITE" id="PS50222">
    <property type="entry name" value="EF_HAND_2"/>
    <property type="match status" value="2"/>
</dbReference>
<sequence>ADKAASGVLTKLPQKQIQEMKEAFSMIDVDRDGFVNKDDLKAISEQLGRTPDDKELTAMLKEAPGPLNFTMFLSIFSDKLSGTDTEETLRNAFAMFDELDTKKLNIEYIKDLLENMGDNFTKDEMRMTFKEAPVTGGKFDYVKFTAMIKGSGEEEA</sequence>
<reference key="1">
    <citation type="journal article" date="1984" name="J. Biochem.">
        <title>Amino acid sequences of the regulatory light chains of striated adductor muscle myosins from Ezo giant scallop and Akazara scallop.</title>
        <authorList>
            <person name="Maita T."/>
            <person name="Konno K."/>
            <person name="Ojima T."/>
            <person name="Matsuda G."/>
        </authorList>
    </citation>
    <scope>PROTEIN SEQUENCE</scope>
</reference>
<evidence type="ECO:0000255" key="1">
    <source>
        <dbReference type="PROSITE-ProRule" id="PRU00448"/>
    </source>
</evidence>
<protein>
    <recommendedName>
        <fullName>Myosin regulatory light chain, striated adductor muscle</fullName>
    </recommendedName>
</protein>
<name>MLRC_MIZYE</name>
<proteinExistence type="evidence at protein level"/>
<feature type="chain" id="PRO_0000198750" description="Myosin regulatory light chain, striated adductor muscle">
    <location>
        <begin position="1"/>
        <end position="156"/>
    </location>
</feature>
<feature type="domain" description="EF-hand 1" evidence="1">
    <location>
        <begin position="15"/>
        <end position="50"/>
    </location>
</feature>
<feature type="domain" description="EF-hand 2" evidence="1">
    <location>
        <begin position="84"/>
        <end position="119"/>
    </location>
</feature>
<feature type="binding site" evidence="1">
    <location>
        <position position="28"/>
    </location>
    <ligand>
        <name>Ca(2+)</name>
        <dbReference type="ChEBI" id="CHEBI:29108"/>
    </ligand>
</feature>
<feature type="binding site" evidence="1">
    <location>
        <position position="30"/>
    </location>
    <ligand>
        <name>Ca(2+)</name>
        <dbReference type="ChEBI" id="CHEBI:29108"/>
    </ligand>
</feature>
<feature type="binding site" evidence="1">
    <location>
        <position position="32"/>
    </location>
    <ligand>
        <name>Ca(2+)</name>
        <dbReference type="ChEBI" id="CHEBI:29108"/>
    </ligand>
</feature>
<feature type="binding site" evidence="1">
    <location>
        <position position="39"/>
    </location>
    <ligand>
        <name>Ca(2+)</name>
        <dbReference type="ChEBI" id="CHEBI:29108"/>
    </ligand>
</feature>
<feature type="modified residue" description="Blocked amino end (Ala)">
    <location>
        <position position="1"/>
    </location>
</feature>
<comment type="function">
    <text>In molluscan muscle, calcium regulation is associated with myosin rather than with actin. Muscle myosin contains two types of light chains: the catalytic light chain, essential for ATPase activity, and the regulatory light chain, a calcium-binding protein responsible for Ca(2+) dependent binding and Ca(2+) dependent Mg-ATPase activity.</text>
</comment>
<comment type="miscellaneous">
    <text>This chain binds calcium.</text>
</comment>
<organism>
    <name type="scientific">Mizuhopecten yessoensis</name>
    <name type="common">Japanese scallop</name>
    <name type="synonym">Patinopecten yessoensis</name>
    <dbReference type="NCBI Taxonomy" id="6573"/>
    <lineage>
        <taxon>Eukaryota</taxon>
        <taxon>Metazoa</taxon>
        <taxon>Spiralia</taxon>
        <taxon>Lophotrochozoa</taxon>
        <taxon>Mollusca</taxon>
        <taxon>Bivalvia</taxon>
        <taxon>Autobranchia</taxon>
        <taxon>Pteriomorphia</taxon>
        <taxon>Pectinida</taxon>
        <taxon>Pectinoidea</taxon>
        <taxon>Pectinidae</taxon>
        <taxon>Mizuhopecten</taxon>
    </lineage>
</organism>
<accession>P05944</accession>